<reference key="1">
    <citation type="journal article" date="2004" name="Nat. Genet.">
        <title>Complete sequencing and characterization of 21,243 full-length human cDNAs.</title>
        <authorList>
            <person name="Ota T."/>
            <person name="Suzuki Y."/>
            <person name="Nishikawa T."/>
            <person name="Otsuki T."/>
            <person name="Sugiyama T."/>
            <person name="Irie R."/>
            <person name="Wakamatsu A."/>
            <person name="Hayashi K."/>
            <person name="Sato H."/>
            <person name="Nagai K."/>
            <person name="Kimura K."/>
            <person name="Makita H."/>
            <person name="Sekine M."/>
            <person name="Obayashi M."/>
            <person name="Nishi T."/>
            <person name="Shibahara T."/>
            <person name="Tanaka T."/>
            <person name="Ishii S."/>
            <person name="Yamamoto J."/>
            <person name="Saito K."/>
            <person name="Kawai Y."/>
            <person name="Isono Y."/>
            <person name="Nakamura Y."/>
            <person name="Nagahari K."/>
            <person name="Murakami K."/>
            <person name="Yasuda T."/>
            <person name="Iwayanagi T."/>
            <person name="Wagatsuma M."/>
            <person name="Shiratori A."/>
            <person name="Sudo H."/>
            <person name="Hosoiri T."/>
            <person name="Kaku Y."/>
            <person name="Kodaira H."/>
            <person name="Kondo H."/>
            <person name="Sugawara M."/>
            <person name="Takahashi M."/>
            <person name="Kanda K."/>
            <person name="Yokoi T."/>
            <person name="Furuya T."/>
            <person name="Kikkawa E."/>
            <person name="Omura Y."/>
            <person name="Abe K."/>
            <person name="Kamihara K."/>
            <person name="Katsuta N."/>
            <person name="Sato K."/>
            <person name="Tanikawa M."/>
            <person name="Yamazaki M."/>
            <person name="Ninomiya K."/>
            <person name="Ishibashi T."/>
            <person name="Yamashita H."/>
            <person name="Murakawa K."/>
            <person name="Fujimori K."/>
            <person name="Tanai H."/>
            <person name="Kimata M."/>
            <person name="Watanabe M."/>
            <person name="Hiraoka S."/>
            <person name="Chiba Y."/>
            <person name="Ishida S."/>
            <person name="Ono Y."/>
            <person name="Takiguchi S."/>
            <person name="Watanabe S."/>
            <person name="Yosida M."/>
            <person name="Hotuta T."/>
            <person name="Kusano J."/>
            <person name="Kanehori K."/>
            <person name="Takahashi-Fujii A."/>
            <person name="Hara H."/>
            <person name="Tanase T.-O."/>
            <person name="Nomura Y."/>
            <person name="Togiya S."/>
            <person name="Komai F."/>
            <person name="Hara R."/>
            <person name="Takeuchi K."/>
            <person name="Arita M."/>
            <person name="Imose N."/>
            <person name="Musashino K."/>
            <person name="Yuuki H."/>
            <person name="Oshima A."/>
            <person name="Sasaki N."/>
            <person name="Aotsuka S."/>
            <person name="Yoshikawa Y."/>
            <person name="Matsunawa H."/>
            <person name="Ichihara T."/>
            <person name="Shiohata N."/>
            <person name="Sano S."/>
            <person name="Moriya S."/>
            <person name="Momiyama H."/>
            <person name="Satoh N."/>
            <person name="Takami S."/>
            <person name="Terashima Y."/>
            <person name="Suzuki O."/>
            <person name="Nakagawa S."/>
            <person name="Senoh A."/>
            <person name="Mizoguchi H."/>
            <person name="Goto Y."/>
            <person name="Shimizu F."/>
            <person name="Wakebe H."/>
            <person name="Hishigaki H."/>
            <person name="Watanabe T."/>
            <person name="Sugiyama A."/>
            <person name="Takemoto M."/>
            <person name="Kawakami B."/>
            <person name="Yamazaki M."/>
            <person name="Watanabe K."/>
            <person name="Kumagai A."/>
            <person name="Itakura S."/>
            <person name="Fukuzumi Y."/>
            <person name="Fujimori Y."/>
            <person name="Komiyama M."/>
            <person name="Tashiro H."/>
            <person name="Tanigami A."/>
            <person name="Fujiwara T."/>
            <person name="Ono T."/>
            <person name="Yamada K."/>
            <person name="Fujii Y."/>
            <person name="Ozaki K."/>
            <person name="Hirao M."/>
            <person name="Ohmori Y."/>
            <person name="Kawabata A."/>
            <person name="Hikiji T."/>
            <person name="Kobatake N."/>
            <person name="Inagaki H."/>
            <person name="Ikema Y."/>
            <person name="Okamoto S."/>
            <person name="Okitani R."/>
            <person name="Kawakami T."/>
            <person name="Noguchi S."/>
            <person name="Itoh T."/>
            <person name="Shigeta K."/>
            <person name="Senba T."/>
            <person name="Matsumura K."/>
            <person name="Nakajima Y."/>
            <person name="Mizuno T."/>
            <person name="Morinaga M."/>
            <person name="Sasaki M."/>
            <person name="Togashi T."/>
            <person name="Oyama M."/>
            <person name="Hata H."/>
            <person name="Watanabe M."/>
            <person name="Komatsu T."/>
            <person name="Mizushima-Sugano J."/>
            <person name="Satoh T."/>
            <person name="Shirai Y."/>
            <person name="Takahashi Y."/>
            <person name="Nakagawa K."/>
            <person name="Okumura K."/>
            <person name="Nagase T."/>
            <person name="Nomura N."/>
            <person name="Kikuchi H."/>
            <person name="Masuho Y."/>
            <person name="Yamashita R."/>
            <person name="Nakai K."/>
            <person name="Yada T."/>
            <person name="Nakamura Y."/>
            <person name="Ohara O."/>
            <person name="Isogai T."/>
            <person name="Sugano S."/>
        </authorList>
    </citation>
    <scope>NUCLEOTIDE SEQUENCE [LARGE SCALE MRNA] (ISOFORM 1)</scope>
    <scope>NUCLEOTIDE SEQUENCE [LARGE SCALE MRNA] OF 1-80 (ISOFORM 2)</scope>
    <scope>VARIANT LEU-163</scope>
    <source>
        <tissue>Pulmonary artery</tissue>
        <tissue>Small intestine</tissue>
    </source>
</reference>
<reference key="2">
    <citation type="journal article" date="2005" name="Nature">
        <title>The DNA sequence of the human X chromosome.</title>
        <authorList>
            <person name="Ross M.T."/>
            <person name="Grafham D.V."/>
            <person name="Coffey A.J."/>
            <person name="Scherer S."/>
            <person name="McLay K."/>
            <person name="Muzny D."/>
            <person name="Platzer M."/>
            <person name="Howell G.R."/>
            <person name="Burrows C."/>
            <person name="Bird C.P."/>
            <person name="Frankish A."/>
            <person name="Lovell F.L."/>
            <person name="Howe K.L."/>
            <person name="Ashurst J.L."/>
            <person name="Fulton R.S."/>
            <person name="Sudbrak R."/>
            <person name="Wen G."/>
            <person name="Jones M.C."/>
            <person name="Hurles M.E."/>
            <person name="Andrews T.D."/>
            <person name="Scott C.E."/>
            <person name="Searle S."/>
            <person name="Ramser J."/>
            <person name="Whittaker A."/>
            <person name="Deadman R."/>
            <person name="Carter N.P."/>
            <person name="Hunt S.E."/>
            <person name="Chen R."/>
            <person name="Cree A."/>
            <person name="Gunaratne P."/>
            <person name="Havlak P."/>
            <person name="Hodgson A."/>
            <person name="Metzker M.L."/>
            <person name="Richards S."/>
            <person name="Scott G."/>
            <person name="Steffen D."/>
            <person name="Sodergren E."/>
            <person name="Wheeler D.A."/>
            <person name="Worley K.C."/>
            <person name="Ainscough R."/>
            <person name="Ambrose K.D."/>
            <person name="Ansari-Lari M.A."/>
            <person name="Aradhya S."/>
            <person name="Ashwell R.I."/>
            <person name="Babbage A.K."/>
            <person name="Bagguley C.L."/>
            <person name="Ballabio A."/>
            <person name="Banerjee R."/>
            <person name="Barker G.E."/>
            <person name="Barlow K.F."/>
            <person name="Barrett I.P."/>
            <person name="Bates K.N."/>
            <person name="Beare D.M."/>
            <person name="Beasley H."/>
            <person name="Beasley O."/>
            <person name="Beck A."/>
            <person name="Bethel G."/>
            <person name="Blechschmidt K."/>
            <person name="Brady N."/>
            <person name="Bray-Allen S."/>
            <person name="Bridgeman A.M."/>
            <person name="Brown A.J."/>
            <person name="Brown M.J."/>
            <person name="Bonnin D."/>
            <person name="Bruford E.A."/>
            <person name="Buhay C."/>
            <person name="Burch P."/>
            <person name="Burford D."/>
            <person name="Burgess J."/>
            <person name="Burrill W."/>
            <person name="Burton J."/>
            <person name="Bye J.M."/>
            <person name="Carder C."/>
            <person name="Carrel L."/>
            <person name="Chako J."/>
            <person name="Chapman J.C."/>
            <person name="Chavez D."/>
            <person name="Chen E."/>
            <person name="Chen G."/>
            <person name="Chen Y."/>
            <person name="Chen Z."/>
            <person name="Chinault C."/>
            <person name="Ciccodicola A."/>
            <person name="Clark S.Y."/>
            <person name="Clarke G."/>
            <person name="Clee C.M."/>
            <person name="Clegg S."/>
            <person name="Clerc-Blankenburg K."/>
            <person name="Clifford K."/>
            <person name="Cobley V."/>
            <person name="Cole C.G."/>
            <person name="Conquer J.S."/>
            <person name="Corby N."/>
            <person name="Connor R.E."/>
            <person name="David R."/>
            <person name="Davies J."/>
            <person name="Davis C."/>
            <person name="Davis J."/>
            <person name="Delgado O."/>
            <person name="Deshazo D."/>
            <person name="Dhami P."/>
            <person name="Ding Y."/>
            <person name="Dinh H."/>
            <person name="Dodsworth S."/>
            <person name="Draper H."/>
            <person name="Dugan-Rocha S."/>
            <person name="Dunham A."/>
            <person name="Dunn M."/>
            <person name="Durbin K.J."/>
            <person name="Dutta I."/>
            <person name="Eades T."/>
            <person name="Ellwood M."/>
            <person name="Emery-Cohen A."/>
            <person name="Errington H."/>
            <person name="Evans K.L."/>
            <person name="Faulkner L."/>
            <person name="Francis F."/>
            <person name="Frankland J."/>
            <person name="Fraser A.E."/>
            <person name="Galgoczy P."/>
            <person name="Gilbert J."/>
            <person name="Gill R."/>
            <person name="Gloeckner G."/>
            <person name="Gregory S.G."/>
            <person name="Gribble S."/>
            <person name="Griffiths C."/>
            <person name="Grocock R."/>
            <person name="Gu Y."/>
            <person name="Gwilliam R."/>
            <person name="Hamilton C."/>
            <person name="Hart E.A."/>
            <person name="Hawes A."/>
            <person name="Heath P.D."/>
            <person name="Heitmann K."/>
            <person name="Hennig S."/>
            <person name="Hernandez J."/>
            <person name="Hinzmann B."/>
            <person name="Ho S."/>
            <person name="Hoffs M."/>
            <person name="Howden P.J."/>
            <person name="Huckle E.J."/>
            <person name="Hume J."/>
            <person name="Hunt P.J."/>
            <person name="Hunt A.R."/>
            <person name="Isherwood J."/>
            <person name="Jacob L."/>
            <person name="Johnson D."/>
            <person name="Jones S."/>
            <person name="de Jong P.J."/>
            <person name="Joseph S.S."/>
            <person name="Keenan S."/>
            <person name="Kelly S."/>
            <person name="Kershaw J.K."/>
            <person name="Khan Z."/>
            <person name="Kioschis P."/>
            <person name="Klages S."/>
            <person name="Knights A.J."/>
            <person name="Kosiura A."/>
            <person name="Kovar-Smith C."/>
            <person name="Laird G.K."/>
            <person name="Langford C."/>
            <person name="Lawlor S."/>
            <person name="Leversha M."/>
            <person name="Lewis L."/>
            <person name="Liu W."/>
            <person name="Lloyd C."/>
            <person name="Lloyd D.M."/>
            <person name="Loulseged H."/>
            <person name="Loveland J.E."/>
            <person name="Lovell J.D."/>
            <person name="Lozado R."/>
            <person name="Lu J."/>
            <person name="Lyne R."/>
            <person name="Ma J."/>
            <person name="Maheshwari M."/>
            <person name="Matthews L.H."/>
            <person name="McDowall J."/>
            <person name="McLaren S."/>
            <person name="McMurray A."/>
            <person name="Meidl P."/>
            <person name="Meitinger T."/>
            <person name="Milne S."/>
            <person name="Miner G."/>
            <person name="Mistry S.L."/>
            <person name="Morgan M."/>
            <person name="Morris S."/>
            <person name="Mueller I."/>
            <person name="Mullikin J.C."/>
            <person name="Nguyen N."/>
            <person name="Nordsiek G."/>
            <person name="Nyakatura G."/>
            <person name="O'dell C.N."/>
            <person name="Okwuonu G."/>
            <person name="Palmer S."/>
            <person name="Pandian R."/>
            <person name="Parker D."/>
            <person name="Parrish J."/>
            <person name="Pasternak S."/>
            <person name="Patel D."/>
            <person name="Pearce A.V."/>
            <person name="Pearson D.M."/>
            <person name="Pelan S.E."/>
            <person name="Perez L."/>
            <person name="Porter K.M."/>
            <person name="Ramsey Y."/>
            <person name="Reichwald K."/>
            <person name="Rhodes S."/>
            <person name="Ridler K.A."/>
            <person name="Schlessinger D."/>
            <person name="Schueler M.G."/>
            <person name="Sehra H.K."/>
            <person name="Shaw-Smith C."/>
            <person name="Shen H."/>
            <person name="Sheridan E.M."/>
            <person name="Shownkeen R."/>
            <person name="Skuce C.D."/>
            <person name="Smith M.L."/>
            <person name="Sotheran E.C."/>
            <person name="Steingruber H.E."/>
            <person name="Steward C.A."/>
            <person name="Storey R."/>
            <person name="Swann R.M."/>
            <person name="Swarbreck D."/>
            <person name="Tabor P.E."/>
            <person name="Taudien S."/>
            <person name="Taylor T."/>
            <person name="Teague B."/>
            <person name="Thomas K."/>
            <person name="Thorpe A."/>
            <person name="Timms K."/>
            <person name="Tracey A."/>
            <person name="Trevanion S."/>
            <person name="Tromans A.C."/>
            <person name="d'Urso M."/>
            <person name="Verduzco D."/>
            <person name="Villasana D."/>
            <person name="Waldron L."/>
            <person name="Wall M."/>
            <person name="Wang Q."/>
            <person name="Warren J."/>
            <person name="Warry G.L."/>
            <person name="Wei X."/>
            <person name="West A."/>
            <person name="Whitehead S.L."/>
            <person name="Whiteley M.N."/>
            <person name="Wilkinson J.E."/>
            <person name="Willey D.L."/>
            <person name="Williams G."/>
            <person name="Williams L."/>
            <person name="Williamson A."/>
            <person name="Williamson H."/>
            <person name="Wilming L."/>
            <person name="Woodmansey R.L."/>
            <person name="Wray P.W."/>
            <person name="Yen J."/>
            <person name="Zhang J."/>
            <person name="Zhou J."/>
            <person name="Zoghbi H."/>
            <person name="Zorilla S."/>
            <person name="Buck D."/>
            <person name="Reinhardt R."/>
            <person name="Poustka A."/>
            <person name="Rosenthal A."/>
            <person name="Lehrach H."/>
            <person name="Meindl A."/>
            <person name="Minx P.J."/>
            <person name="Hillier L.W."/>
            <person name="Willard H.F."/>
            <person name="Wilson R.K."/>
            <person name="Waterston R.H."/>
            <person name="Rice C.M."/>
            <person name="Vaudin M."/>
            <person name="Coulson A."/>
            <person name="Nelson D.L."/>
            <person name="Weinstock G."/>
            <person name="Sulston J.E."/>
            <person name="Durbin R.M."/>
            <person name="Hubbard T."/>
            <person name="Gibbs R.A."/>
            <person name="Beck S."/>
            <person name="Rogers J."/>
            <person name="Bentley D.R."/>
        </authorList>
    </citation>
    <scope>NUCLEOTIDE SEQUENCE [LARGE SCALE GENOMIC DNA]</scope>
</reference>
<reference key="3">
    <citation type="journal article" date="2004" name="Genome Res.">
        <title>The status, quality, and expansion of the NIH full-length cDNA project: the Mammalian Gene Collection (MGC).</title>
        <authorList>
            <consortium name="The MGC Project Team"/>
        </authorList>
    </citation>
    <scope>NUCLEOTIDE SEQUENCE [LARGE SCALE MRNA] (ISOFORM 1)</scope>
    <source>
        <tissue>Skin</tissue>
    </source>
</reference>
<evidence type="ECO:0000255" key="1">
    <source>
        <dbReference type="PROSITE-ProRule" id="PRU00649"/>
    </source>
</evidence>
<evidence type="ECO:0000255" key="2">
    <source>
        <dbReference type="PROSITE-ProRule" id="PRU00651"/>
    </source>
</evidence>
<evidence type="ECO:0000256" key="3">
    <source>
        <dbReference type="SAM" id="MobiDB-lite"/>
    </source>
</evidence>
<evidence type="ECO:0000269" key="4">
    <source>
    </source>
</evidence>
<evidence type="ECO:0000303" key="5">
    <source>
    </source>
</evidence>
<evidence type="ECO:0000305" key="6"/>
<organism>
    <name type="scientific">Homo sapiens</name>
    <name type="common">Human</name>
    <dbReference type="NCBI Taxonomy" id="9606"/>
    <lineage>
        <taxon>Eukaryota</taxon>
        <taxon>Metazoa</taxon>
        <taxon>Chordata</taxon>
        <taxon>Craniata</taxon>
        <taxon>Vertebrata</taxon>
        <taxon>Euteleostomi</taxon>
        <taxon>Mammalia</taxon>
        <taxon>Eutheria</taxon>
        <taxon>Euarchontoglires</taxon>
        <taxon>Primates</taxon>
        <taxon>Haplorrhini</taxon>
        <taxon>Catarrhini</taxon>
        <taxon>Hominidae</taxon>
        <taxon>Homo</taxon>
    </lineage>
</organism>
<accession>Q8N8B7</accession>
<accession>A6NI06</accession>
<accession>B2RDM3</accession>
<sequence>MSDKNQIAARASLIEQLMSKRNFEDLGNHLTELETIYVTKEHLQETDVVRAVYRVLKNCPSVALKKKAKCLLSKWKAVYKQTHSKARNSPKLFPVRGNKEENSGPSHDPSQNETLGICSSNSLSSQDVAKLSEMIVPENRAIQLKPKEEHFGDGDPESTGKRSSELLDPTTPMRTKCIELLYAALTSSSTDQPKADLWQNFAREIEEHVFTLYSKNIKKYKTCIRSKVANLKNPRNSHLQQNLLSGTTSPREFAEMTVMEMANKELKQLRASYTESCIQEHYLPQVIDGTQTNKIKCRRCEKYNCKVTVIDRGTLFLPSWVRNSNPDEQMMTYVICNECGEQWYHSKWVCW</sequence>
<feature type="chain" id="PRO_0000259659" description="Transcription elongation factor A N-terminal and central domain-containing protein">
    <location>
        <begin position="1"/>
        <end position="351"/>
    </location>
</feature>
<feature type="domain" description="TFIIS N-terminal" evidence="1">
    <location>
        <begin position="5"/>
        <end position="82"/>
    </location>
</feature>
<feature type="domain" description="TFIIS central" evidence="2">
    <location>
        <begin position="173"/>
        <end position="289"/>
    </location>
</feature>
<feature type="region of interest" description="Disordered" evidence="3">
    <location>
        <begin position="86"/>
        <end position="119"/>
    </location>
</feature>
<feature type="region of interest" description="Disordered" evidence="3">
    <location>
        <begin position="144"/>
        <end position="169"/>
    </location>
</feature>
<feature type="compositionally biased region" description="Polar residues" evidence="3">
    <location>
        <begin position="103"/>
        <end position="119"/>
    </location>
</feature>
<feature type="compositionally biased region" description="Basic and acidic residues" evidence="3">
    <location>
        <begin position="145"/>
        <end position="165"/>
    </location>
</feature>
<feature type="splice variant" id="VSP_039895" description="In isoform 2." evidence="5">
    <original>M</original>
    <variation>MISAHRKLCLPGSSNSPASAFRVAGTTAVKM</variation>
    <location>
        <position position="1"/>
    </location>
</feature>
<feature type="sequence variant" id="VAR_028970" description="In dbSNP:rs2361159." evidence="4">
    <original>S</original>
    <variation>L</variation>
    <location>
        <position position="163"/>
    </location>
</feature>
<protein>
    <recommendedName>
        <fullName>Transcription elongation factor A N-terminal and central domain-containing protein</fullName>
    </recommendedName>
    <alternativeName>
        <fullName>TFIIS central domain-containing protein 1</fullName>
    </alternativeName>
</protein>
<comment type="interaction">
    <interactant intactId="EBI-954696">
        <id>Q8N8B7</id>
    </interactant>
    <interactant intactId="EBI-751319">
        <id>Q9H257</id>
        <label>CARD9</label>
    </interactant>
    <organismsDiffer>false</organismsDiffer>
    <experiments>3</experiments>
</comment>
<comment type="interaction">
    <interactant intactId="EBI-954696">
        <id>Q8N8B7</id>
    </interactant>
    <interactant intactId="EBI-741724">
        <id>Q8NA61</id>
        <label>CBY2</label>
    </interactant>
    <organismsDiffer>false</organismsDiffer>
    <experiments>3</experiments>
</comment>
<comment type="interaction">
    <interactant intactId="EBI-954696">
        <id>Q8N8B7</id>
    </interactant>
    <interactant intactId="EBI-10267893">
        <id>Q8N4Y2</id>
        <label>CRACR2B</label>
    </interactant>
    <organismsDiffer>false</organismsDiffer>
    <experiments>3</experiments>
</comment>
<comment type="interaction">
    <interactant intactId="EBI-954696">
        <id>Q8N8B7</id>
    </interactant>
    <interactant intactId="EBI-4311573">
        <id>Q96S65</id>
        <label>CSRNP1</label>
    </interactant>
    <organismsDiffer>false</organismsDiffer>
    <experiments>3</experiments>
</comment>
<comment type="interaction">
    <interactant intactId="EBI-954696">
        <id>Q8N8B7</id>
    </interactant>
    <interactant intactId="EBI-7875264">
        <id>O75553</id>
        <label>DAB1</label>
    </interactant>
    <organismsDiffer>false</organismsDiffer>
    <experiments>3</experiments>
</comment>
<comment type="interaction">
    <interactant intactId="EBI-954696">
        <id>Q8N8B7</id>
    </interactant>
    <interactant intactId="EBI-10175124">
        <id>Q8IZU0</id>
        <label>FAM9B</label>
    </interactant>
    <organismsDiffer>false</organismsDiffer>
    <experiments>3</experiments>
</comment>
<comment type="interaction">
    <interactant intactId="EBI-954696">
        <id>Q8N8B7</id>
    </interactant>
    <interactant intactId="EBI-1059030">
        <id>O95073</id>
        <label>FSBP</label>
    </interactant>
    <organismsDiffer>false</organismsDiffer>
    <experiments>3</experiments>
</comment>
<comment type="interaction">
    <interactant intactId="EBI-954696">
        <id>Q8N8B7</id>
    </interactant>
    <interactant intactId="EBI-5661036">
        <id>A1L4K1</id>
        <label>FSD2</label>
    </interactant>
    <organismsDiffer>false</organismsDiffer>
    <experiments>3</experiments>
</comment>
<comment type="interaction">
    <interactant intactId="EBI-954696">
        <id>Q8N8B7</id>
    </interactant>
    <interactant intactId="EBI-618309">
        <id>Q08379</id>
        <label>GOLGA2</label>
    </interactant>
    <organismsDiffer>false</organismsDiffer>
    <experiments>3</experiments>
</comment>
<comment type="interaction">
    <interactant intactId="EBI-954696">
        <id>Q8N8B7</id>
    </interactant>
    <interactant intactId="EBI-2549423">
        <id>Q6NT76</id>
        <label>HMBOX1</label>
    </interactant>
    <organismsDiffer>false</organismsDiffer>
    <experiments>3</experiments>
</comment>
<comment type="interaction">
    <interactant intactId="EBI-954696">
        <id>Q8N8B7</id>
    </interactant>
    <interactant intactId="EBI-2125614">
        <id>Q9BVG8</id>
        <label>KIFC3</label>
    </interactant>
    <organismsDiffer>false</organismsDiffer>
    <experiments>3</experiments>
</comment>
<comment type="interaction">
    <interactant intactId="EBI-954696">
        <id>Q8N8B7</id>
    </interactant>
    <interactant intactId="EBI-10172290">
        <id>P60409</id>
        <label>KRTAP10-7</label>
    </interactant>
    <organismsDiffer>false</organismsDiffer>
    <experiments>3</experiments>
</comment>
<comment type="interaction">
    <interactant intactId="EBI-954696">
        <id>Q8N8B7</id>
    </interactant>
    <interactant intactId="EBI-10172511">
        <id>Q9BYR5</id>
        <label>KRTAP4-2</label>
    </interactant>
    <organismsDiffer>false</organismsDiffer>
    <experiments>3</experiments>
</comment>
<comment type="interaction">
    <interactant intactId="EBI-954696">
        <id>Q8N8B7</id>
    </interactant>
    <interactant intactId="EBI-3958099">
        <id>P26371</id>
        <label>KRTAP5-9</label>
    </interactant>
    <organismsDiffer>false</organismsDiffer>
    <experiments>3</experiments>
</comment>
<comment type="interaction">
    <interactant intactId="EBI-954696">
        <id>Q8N8B7</id>
    </interactant>
    <interactant intactId="EBI-2864512">
        <id>P50221</id>
        <label>MEOX1</label>
    </interactant>
    <organismsDiffer>false</organismsDiffer>
    <experiments>3</experiments>
</comment>
<comment type="interaction">
    <interactant intactId="EBI-954696">
        <id>Q8N8B7</id>
    </interactant>
    <interactant intactId="EBI-2340316">
        <id>O15344</id>
        <label>MID1</label>
    </interactant>
    <organismsDiffer>false</organismsDiffer>
    <experiments>3</experiments>
</comment>
<comment type="interaction">
    <interactant intactId="EBI-954696">
        <id>Q8N8B7</id>
    </interactant>
    <interactant intactId="EBI-8641936">
        <id>Q15742</id>
        <label>NAB2</label>
    </interactant>
    <organismsDiffer>false</organismsDiffer>
    <experiments>3</experiments>
</comment>
<comment type="interaction">
    <interactant intactId="EBI-954696">
        <id>Q8N8B7</id>
    </interactant>
    <interactant intactId="EBI-2562035">
        <id>Q5W0B1</id>
        <label>OBI1</label>
    </interactant>
    <organismsDiffer>false</organismsDiffer>
    <experiments>3</experiments>
</comment>
<comment type="interaction">
    <interactant intactId="EBI-954696">
        <id>Q8N8B7</id>
    </interactant>
    <interactant intactId="EBI-302345">
        <id>Q8ND90</id>
        <label>PNMA1</label>
    </interactant>
    <organismsDiffer>false</organismsDiffer>
    <experiments>3</experiments>
</comment>
<comment type="interaction">
    <interactant intactId="EBI-954696">
        <id>Q8N8B7</id>
    </interactant>
    <interactant intactId="EBI-2515299">
        <id>O43805</id>
        <label>SSNA1</label>
    </interactant>
    <organismsDiffer>false</organismsDiffer>
    <experiments>3</experiments>
</comment>
<comment type="interaction">
    <interactant intactId="EBI-954696">
        <id>Q8N8B7</id>
    </interactant>
    <interactant intactId="EBI-978581">
        <id>Q15633</id>
        <label>TARBP2</label>
    </interactant>
    <organismsDiffer>false</organismsDiffer>
    <experiments>3</experiments>
</comment>
<comment type="interaction">
    <interactant intactId="EBI-954696">
        <id>Q8N8B7</id>
    </interactant>
    <interactant intactId="EBI-2107455">
        <id>Q08AM6</id>
        <label>VAC14</label>
    </interactant>
    <organismsDiffer>false</organismsDiffer>
    <experiments>3</experiments>
</comment>
<comment type="interaction">
    <interactant intactId="EBI-954696">
        <id>Q8N8B7</id>
    </interactant>
    <interactant intactId="EBI-2799833">
        <id>Q8N1B4</id>
        <label>VPS52</label>
    </interactant>
    <organismsDiffer>false</organismsDiffer>
    <experiments>3</experiments>
</comment>
<comment type="interaction">
    <interactant intactId="EBI-954696">
        <id>Q8N8B7</id>
    </interactant>
    <interactant intactId="EBI-10176632">
        <id>O43829</id>
        <label>ZBTB14</label>
    </interactant>
    <organismsDiffer>false</organismsDiffer>
    <experiments>3</experiments>
</comment>
<comment type="interaction">
    <interactant intactId="EBI-11955057">
        <id>Q8N8B7-2</id>
    </interactant>
    <interactant intactId="EBI-12002366">
        <id>P78563-4</id>
        <label>ADARB1</label>
    </interactant>
    <organismsDiffer>false</organismsDiffer>
    <experiments>3</experiments>
</comment>
<comment type="interaction">
    <interactant intactId="EBI-11955057">
        <id>Q8N8B7-2</id>
    </interactant>
    <interactant intactId="EBI-11745576">
        <id>Q6PJH3</id>
        <label>AKAP9</label>
    </interactant>
    <organismsDiffer>false</organismsDiffer>
    <experiments>3</experiments>
</comment>
<comment type="interaction">
    <interactant intactId="EBI-11955057">
        <id>Q8N8B7-2</id>
    </interactant>
    <interactant intactId="EBI-12224467">
        <id>Q9NYG5-2</id>
        <label>ANAPC11</label>
    </interactant>
    <organismsDiffer>false</organismsDiffer>
    <experiments>3</experiments>
</comment>
<comment type="interaction">
    <interactant intactId="EBI-11955057">
        <id>Q8N8B7-2</id>
    </interactant>
    <interactant intactId="EBI-930964">
        <id>P54253</id>
        <label>ATXN1</label>
    </interactant>
    <organismsDiffer>false</organismsDiffer>
    <experiments>3</experiments>
</comment>
<comment type="interaction">
    <interactant intactId="EBI-11955057">
        <id>Q8N8B7-2</id>
    </interactant>
    <interactant intactId="EBI-4400025">
        <id>Q9Y2T1</id>
        <label>AXIN2</label>
    </interactant>
    <organismsDiffer>false</organismsDiffer>
    <experiments>3</experiments>
</comment>
<comment type="interaction">
    <interactant intactId="EBI-11955057">
        <id>Q8N8B7-2</id>
    </interactant>
    <interactant intactId="EBI-11975051">
        <id>Q8TD16-2</id>
        <label>BICD2</label>
    </interactant>
    <organismsDiffer>false</organismsDiffer>
    <experiments>3</experiments>
</comment>
<comment type="interaction">
    <interactant intactId="EBI-11955057">
        <id>Q8N8B7-2</id>
    </interactant>
    <interactant intactId="EBI-2817707">
        <id>Q9BXJ5</id>
        <label>C1QTNF2</label>
    </interactant>
    <organismsDiffer>false</organismsDiffer>
    <experiments>3</experiments>
</comment>
<comment type="interaction">
    <interactant intactId="EBI-11955057">
        <id>Q8N8B7-2</id>
    </interactant>
    <interactant intactId="EBI-11530605">
        <id>Q9H257-2</id>
        <label>CARD9</label>
    </interactant>
    <organismsDiffer>false</organismsDiffer>
    <experiments>3</experiments>
</comment>
<comment type="interaction">
    <interactant intactId="EBI-11955057">
        <id>Q8N8B7-2</id>
    </interactant>
    <interactant intactId="EBI-11524851">
        <id>Q8NA61-2</id>
        <label>CBY2</label>
    </interactant>
    <organismsDiffer>false</organismsDiffer>
    <experiments>3</experiments>
</comment>
<comment type="interaction">
    <interactant intactId="EBI-11955057">
        <id>Q8N8B7-2</id>
    </interactant>
    <interactant intactId="EBI-10171570">
        <id>Q68D86</id>
        <label>CCDC102B</label>
    </interactant>
    <organismsDiffer>false</organismsDiffer>
    <experiments>3</experiments>
</comment>
<comment type="interaction">
    <interactant intactId="EBI-11955057">
        <id>Q8N8B7-2</id>
    </interactant>
    <interactant intactId="EBI-10972887">
        <id>Q96M89-2</id>
        <label>CCDC138</label>
    </interactant>
    <organismsDiffer>false</organismsDiffer>
    <experiments>3</experiments>
</comment>
<comment type="interaction">
    <interactant intactId="EBI-11955057">
        <id>Q8N8B7-2</id>
    </interactant>
    <interactant intactId="EBI-395261">
        <id>P24863</id>
        <label>CCNC</label>
    </interactant>
    <organismsDiffer>false</organismsDiffer>
    <experiments>3</experiments>
</comment>
<comment type="interaction">
    <interactant intactId="EBI-11955057">
        <id>Q8N8B7-2</id>
    </interactant>
    <interactant intactId="EBI-11063830">
        <id>Q86X02</id>
        <label>CDR2L</label>
    </interactant>
    <organismsDiffer>false</organismsDiffer>
    <experiments>3</experiments>
</comment>
<comment type="interaction">
    <interactant intactId="EBI-11955057">
        <id>Q8N8B7-2</id>
    </interactant>
    <interactant intactId="EBI-739624">
        <id>Q8NHQ1</id>
        <label>CEP70</label>
    </interactant>
    <organismsDiffer>false</organismsDiffer>
    <experiments>3</experiments>
</comment>
<comment type="interaction">
    <interactant intactId="EBI-11955057">
        <id>Q8N8B7-2</id>
    </interactant>
    <interactant intactId="EBI-742887">
        <id>Q8TAP6</id>
        <label>CEP76</label>
    </interactant>
    <organismsDiffer>false</organismsDiffer>
    <experiments>3</experiments>
</comment>
<comment type="interaction">
    <interactant intactId="EBI-11955057">
        <id>Q8N8B7-2</id>
    </interactant>
    <interactant intactId="EBI-11982645">
        <id>Q8N4Y2-3</id>
        <label>CRACR2B</label>
    </interactant>
    <organismsDiffer>false</organismsDiffer>
    <experiments>3</experiments>
</comment>
<comment type="interaction">
    <interactant intactId="EBI-11955057">
        <id>Q8N8B7-2</id>
    </interactant>
    <interactant intactId="EBI-852194">
        <id>Q68CJ9</id>
        <label>CREB3L3</label>
    </interactant>
    <organismsDiffer>false</organismsDiffer>
    <experiments>3</experiments>
</comment>
<comment type="interaction">
    <interactant intactId="EBI-11955057">
        <id>Q8N8B7-2</id>
    </interactant>
    <interactant intactId="EBI-4311573">
        <id>Q96S65</id>
        <label>CSRNP1</label>
    </interactant>
    <organismsDiffer>false</organismsDiffer>
    <experiments>3</experiments>
</comment>
<comment type="interaction">
    <interactant intactId="EBI-11955057">
        <id>Q8N8B7-2</id>
    </interactant>
    <interactant intactId="EBI-1188472">
        <id>P78358</id>
        <label>CTAG1B</label>
    </interactant>
    <organismsDiffer>false</organismsDiffer>
    <experiments>3</experiments>
</comment>
<comment type="interaction">
    <interactant intactId="EBI-11955057">
        <id>Q8N8B7-2</id>
    </interactant>
    <interactant intactId="EBI-3867333">
        <id>A8MQ03</id>
        <label>CYSRT1</label>
    </interactant>
    <organismsDiffer>false</organismsDiffer>
    <experiments>3</experiments>
</comment>
<comment type="interaction">
    <interactant intactId="EBI-11955057">
        <id>Q8N8B7-2</id>
    </interactant>
    <interactant intactId="EBI-11988027">
        <id>Q9NRI5-2</id>
        <label>DISC1</label>
    </interactant>
    <organismsDiffer>false</organismsDiffer>
    <experiments>3</experiments>
</comment>
<comment type="interaction">
    <interactant intactId="EBI-11955057">
        <id>Q8N8B7-2</id>
    </interactant>
    <interactant intactId="EBI-399105">
        <id>Q9NPF5</id>
        <label>DMAP1</label>
    </interactant>
    <organismsDiffer>false</organismsDiffer>
    <experiments>3</experiments>
</comment>
<comment type="interaction">
    <interactant intactId="EBI-11955057">
        <id>Q8N8B7-2</id>
    </interactant>
    <interactant intactId="EBI-2340258">
        <id>Q8N9I9</id>
        <label>DTX3</label>
    </interactant>
    <organismsDiffer>false</organismsDiffer>
    <experiments>3</experiments>
</comment>
<comment type="interaction">
    <interactant intactId="EBI-11955057">
        <id>Q8N8B7-2</id>
    </interactant>
    <interactant intactId="EBI-739789">
        <id>Q92997</id>
        <label>DVL3</label>
    </interactant>
    <organismsDiffer>false</organismsDiffer>
    <experiments>3</experiments>
</comment>
<comment type="interaction">
    <interactant intactId="EBI-11955057">
        <id>Q8N8B7-2</id>
    </interactant>
    <interactant intactId="EBI-1176455">
        <id>P63172</id>
        <label>DYNLT1</label>
    </interactant>
    <organismsDiffer>false</organismsDiffer>
    <experiments>3</experiments>
</comment>
<comment type="interaction">
    <interactant intactId="EBI-11955057">
        <id>Q8N8B7-2</id>
    </interactant>
    <interactant intactId="EBI-852291">
        <id>O60447</id>
        <label>EVI5</label>
    </interactant>
    <organismsDiffer>false</organismsDiffer>
    <experiments>3</experiments>
</comment>
<comment type="interaction">
    <interactant intactId="EBI-11955057">
        <id>Q8N8B7-2</id>
    </interactant>
    <interactant intactId="EBI-19153639">
        <id>Q9NTX9</id>
        <label>FAM217B</label>
    </interactant>
    <organismsDiffer>false</organismsDiffer>
    <experiments>3</experiments>
</comment>
<comment type="interaction">
    <interactant intactId="EBI-11955057">
        <id>Q8N8B7-2</id>
    </interactant>
    <interactant intactId="EBI-81610">
        <id>O15287</id>
        <label>FANCG</label>
    </interactant>
    <organismsDiffer>false</organismsDiffer>
    <experiments>3</experiments>
</comment>
<comment type="interaction">
    <interactant intactId="EBI-11955057">
        <id>Q8N8B7-2</id>
    </interactant>
    <interactant intactId="EBI-11977403">
        <id>A0A0C3SFZ9</id>
        <label>FCHO1</label>
    </interactant>
    <organismsDiffer>false</organismsDiffer>
    <experiments>3</experiments>
</comment>
<comment type="interaction">
    <interactant intactId="EBI-11955057">
        <id>Q8N8B7-2</id>
    </interactant>
    <interactant intactId="EBI-618309">
        <id>Q08379</id>
        <label>GOLGA2</label>
    </interactant>
    <organismsDiffer>false</organismsDiffer>
    <experiments>3</experiments>
</comment>
<comment type="interaction">
    <interactant intactId="EBI-11955057">
        <id>Q8N8B7-2</id>
    </interactant>
    <interactant intactId="EBI-5916454">
        <id>A6NEM1</id>
        <label>GOLGA6L9</label>
    </interactant>
    <organismsDiffer>false</organismsDiffer>
    <experiments>3</experiments>
</comment>
<comment type="interaction">
    <interactant intactId="EBI-11955057">
        <id>Q8N8B7-2</id>
    </interactant>
    <interactant intactId="EBI-12163087">
        <id>Q9BYE0</id>
        <label>HES7</label>
    </interactant>
    <organismsDiffer>false</organismsDiffer>
    <experiments>3</experiments>
</comment>
<comment type="interaction">
    <interactant intactId="EBI-11955057">
        <id>Q8N8B7-2</id>
    </interactant>
    <interactant intactId="EBI-473886">
        <id>O00291</id>
        <label>HIP1</label>
    </interactant>
    <organismsDiffer>false</organismsDiffer>
    <experiments>3</experiments>
</comment>
<comment type="interaction">
    <interactant intactId="EBI-11955057">
        <id>Q8N8B7-2</id>
    </interactant>
    <interactant intactId="EBI-10961706">
        <id>Q96ED9-2</id>
        <label>HOOK2</label>
    </interactant>
    <organismsDiffer>false</organismsDiffer>
    <experiments>3</experiments>
</comment>
<comment type="interaction">
    <interactant intactId="EBI-11955057">
        <id>Q8N8B7-2</id>
    </interactant>
    <interactant intactId="EBI-12837046">
        <id>P05019-2</id>
        <label>IGF1</label>
    </interactant>
    <organismsDiffer>false</organismsDiffer>
    <experiments>3</experiments>
</comment>
<comment type="interaction">
    <interactant intactId="EBI-11955057">
        <id>Q8N8B7-2</id>
    </interactant>
    <interactant intactId="EBI-11536241">
        <id>Q9UKS7-2</id>
        <label>IKZF2</label>
    </interactant>
    <organismsDiffer>false</organismsDiffer>
    <experiments>3</experiments>
</comment>
<comment type="interaction">
    <interactant intactId="EBI-11955057">
        <id>Q8N8B7-2</id>
    </interactant>
    <interactant intactId="EBI-747204">
        <id>Q9UKT9</id>
        <label>IKZF3</label>
    </interactant>
    <organismsDiffer>false</organismsDiffer>
    <experiments>3</experiments>
</comment>
<comment type="interaction">
    <interactant intactId="EBI-11955057">
        <id>Q8N8B7-2</id>
    </interactant>
    <interactant intactId="EBI-715394">
        <id>Q9H079</id>
        <label>KATNBL1</label>
    </interactant>
    <organismsDiffer>false</organismsDiffer>
    <experiments>3</experiments>
</comment>
<comment type="interaction">
    <interactant intactId="EBI-11955057">
        <id>Q8N8B7-2</id>
    </interactant>
    <interactant intactId="EBI-2511344">
        <id>Q8NC69</id>
        <label>KCTD6</label>
    </interactant>
    <organismsDiffer>false</organismsDiffer>
    <experiments>3</experiments>
</comment>
<comment type="interaction">
    <interactant intactId="EBI-11955057">
        <id>Q8N8B7-2</id>
    </interactant>
    <interactant intactId="EBI-11954971">
        <id>Q96MP8-2</id>
        <label>KCTD7</label>
    </interactant>
    <organismsDiffer>false</organismsDiffer>
    <experiments>3</experiments>
</comment>
<comment type="interaction">
    <interactant intactId="EBI-11955057">
        <id>Q8N8B7-2</id>
    </interactant>
    <interactant intactId="EBI-10181113">
        <id>Q8N8K9</id>
        <label>KIAA1958</label>
    </interactant>
    <organismsDiffer>false</organismsDiffer>
    <experiments>3</experiments>
</comment>
<comment type="interaction">
    <interactant intactId="EBI-11955057">
        <id>Q8N8B7-2</id>
    </interactant>
    <interactant intactId="EBI-10988217">
        <id>Q96L93-6</id>
        <label>KIF16B</label>
    </interactant>
    <organismsDiffer>false</organismsDiffer>
    <experiments>3</experiments>
</comment>
<comment type="interaction">
    <interactant intactId="EBI-11955057">
        <id>Q8N8B7-2</id>
    </interactant>
    <interactant intactId="EBI-740929">
        <id>Q53G59</id>
        <label>KLHL12</label>
    </interactant>
    <organismsDiffer>false</organismsDiffer>
    <experiments>3</experiments>
</comment>
<comment type="interaction">
    <interactant intactId="EBI-11955057">
        <id>Q8N8B7-2</id>
    </interactant>
    <interactant intactId="EBI-948001">
        <id>Q15323</id>
        <label>KRT31</label>
    </interactant>
    <organismsDiffer>false</organismsDiffer>
    <experiments>3</experiments>
</comment>
<comment type="interaction">
    <interactant intactId="EBI-11955057">
        <id>Q8N8B7-2</id>
    </interactant>
    <interactant intactId="EBI-1058674">
        <id>Q92764</id>
        <label>KRT35</label>
    </interactant>
    <organismsDiffer>false</organismsDiffer>
    <experiments>3</experiments>
</comment>
<comment type="interaction">
    <interactant intactId="EBI-11955057">
        <id>Q8N8B7-2</id>
    </interactant>
    <interactant intactId="EBI-10171697">
        <id>Q6A162</id>
        <label>KRT40</label>
    </interactant>
    <organismsDiffer>false</organismsDiffer>
    <experiments>3</experiments>
</comment>
<comment type="interaction">
    <interactant intactId="EBI-11955057">
        <id>Q8N8B7-2</id>
    </interactant>
    <interactant intactId="EBI-11959885">
        <id>Q07627</id>
        <label>KRTAP1-1</label>
    </interactant>
    <organismsDiffer>false</organismsDiffer>
    <experiments>3</experiments>
</comment>
<comment type="interaction">
    <interactant intactId="EBI-11955057">
        <id>Q8N8B7-2</id>
    </interactant>
    <interactant intactId="EBI-10171774">
        <id>P60410</id>
        <label>KRTAP10-8</label>
    </interactant>
    <organismsDiffer>false</organismsDiffer>
    <experiments>3</experiments>
</comment>
<comment type="interaction">
    <interactant intactId="EBI-11955057">
        <id>Q8N8B7-2</id>
    </interactant>
    <interactant intactId="EBI-11953334">
        <id>P60328</id>
        <label>KRTAP12-3</label>
    </interactant>
    <organismsDiffer>false</organismsDiffer>
    <experiments>3</experiments>
</comment>
<comment type="interaction">
    <interactant intactId="EBI-11955057">
        <id>Q8N8B7-2</id>
    </interactant>
    <interactant intactId="EBI-3958099">
        <id>P26371</id>
        <label>KRTAP5-9</label>
    </interactant>
    <organismsDiffer>false</organismsDiffer>
    <experiments>3</experiments>
</comment>
<comment type="interaction">
    <interactant intactId="EBI-11955057">
        <id>Q8N8B7-2</id>
    </interactant>
    <interactant intactId="EBI-11985629">
        <id>Q96JM7-2</id>
        <label>L3MBTL3</label>
    </interactant>
    <organismsDiffer>false</organismsDiffer>
    <experiments>3</experiments>
</comment>
<comment type="interaction">
    <interactant intactId="EBI-11955057">
        <id>Q8N8B7-2</id>
    </interactant>
    <interactant intactId="EBI-740738">
        <id>O95751</id>
        <label>LDOC1</label>
    </interactant>
    <organismsDiffer>false</organismsDiffer>
    <experiments>3</experiments>
</comment>
<comment type="interaction">
    <interactant intactId="EBI-11955057">
        <id>Q8N8B7-2</id>
    </interactant>
    <interactant intactId="EBI-12179869">
        <id>P50458</id>
        <label>LHX2</label>
    </interactant>
    <organismsDiffer>false</organismsDiffer>
    <experiments>3</experiments>
</comment>
<comment type="interaction">
    <interactant intactId="EBI-11955057">
        <id>Q8N8B7-2</id>
    </interactant>
    <interactant intactId="EBI-12039345">
        <id>Q9UBR4-2</id>
        <label>LHX3</label>
    </interactant>
    <organismsDiffer>false</organismsDiffer>
    <experiments>3</experiments>
</comment>
<comment type="interaction">
    <interactant intactId="EBI-11955057">
        <id>Q8N8B7-2</id>
    </interactant>
    <interactant intactId="EBI-821335">
        <id>Q9HAP6</id>
        <label>LIN7B</label>
    </interactant>
    <organismsDiffer>false</organismsDiffer>
    <experiments>3</experiments>
</comment>
<comment type="interaction">
    <interactant intactId="EBI-11955057">
        <id>Q8N8B7-2</id>
    </interactant>
    <interactant intactId="EBI-19133880">
        <id>Q9BX40-2</id>
        <label>LSM14B</label>
    </interactant>
    <organismsDiffer>false</organismsDiffer>
    <experiments>3</experiments>
</comment>
<comment type="interaction">
    <interactant intactId="EBI-11955057">
        <id>Q8N8B7-2</id>
    </interactant>
    <interactant intactId="EBI-307531">
        <id>P23508</id>
        <label>MCC</label>
    </interactant>
    <organismsDiffer>false</organismsDiffer>
    <experiments>3</experiments>
</comment>
<comment type="interaction">
    <interactant intactId="EBI-11955057">
        <id>Q8N8B7-2</id>
    </interactant>
    <interactant intactId="EBI-3954372">
        <id>D6RGH6</id>
        <label>MCIDAS</label>
    </interactant>
    <organismsDiffer>false</organismsDiffer>
    <experiments>3</experiments>
</comment>
<comment type="interaction">
    <interactant intactId="EBI-11955057">
        <id>Q8N8B7-2</id>
    </interactant>
    <interactant intactId="EBI-724076">
        <id>Q99750</id>
        <label>MDFI</label>
    </interactant>
    <organismsDiffer>false</organismsDiffer>
    <experiments>3</experiments>
</comment>
<comment type="interaction">
    <interactant intactId="EBI-11955057">
        <id>Q8N8B7-2</id>
    </interactant>
    <interactant intactId="EBI-16439278">
        <id>Q6FHY5</id>
        <label>MEOX2</label>
    </interactant>
    <organismsDiffer>false</organismsDiffer>
    <experiments>3</experiments>
</comment>
<comment type="interaction">
    <interactant intactId="EBI-11955057">
        <id>Q8N8B7-2</id>
    </interactant>
    <interactant intactId="EBI-10172526">
        <id>Q9UJV3-2</id>
        <label>MID2</label>
    </interactant>
    <organismsDiffer>false</organismsDiffer>
    <experiments>3</experiments>
</comment>
<comment type="interaction">
    <interactant intactId="EBI-11955057">
        <id>Q8N8B7-2</id>
    </interactant>
    <interactant intactId="EBI-11522433">
        <id>Q5JR59-3</id>
        <label>MTUS2</label>
    </interactant>
    <organismsDiffer>false</organismsDiffer>
    <experiments>3</experiments>
</comment>
<comment type="interaction">
    <interactant intactId="EBI-11955057">
        <id>Q8N8B7-2</id>
    </interactant>
    <interactant intactId="EBI-17491620">
        <id>P13349</id>
        <label>MYF5</label>
    </interactant>
    <organismsDiffer>false</organismsDiffer>
    <experiments>3</experiments>
</comment>
<comment type="interaction">
    <interactant intactId="EBI-11955057">
        <id>Q8N8B7-2</id>
    </interactant>
    <interactant intactId="EBI-6952711">
        <id>Q8WY64</id>
        <label>MYLIP</label>
    </interactant>
    <organismsDiffer>false</organismsDiffer>
    <experiments>3</experiments>
</comment>
<comment type="interaction">
    <interactant intactId="EBI-11955057">
        <id>Q8N8B7-2</id>
    </interactant>
    <interactant intactId="EBI-8641936">
        <id>Q15742</id>
        <label>NAB2</label>
    </interactant>
    <organismsDiffer>false</organismsDiffer>
    <experiments>3</experiments>
</comment>
<comment type="interaction">
    <interactant intactId="EBI-11955057">
        <id>Q8N8B7-2</id>
    </interactant>
    <interactant intactId="EBI-11956853">
        <id>Q8N987</id>
        <label>NECAB1</label>
    </interactant>
    <organismsDiffer>false</organismsDiffer>
    <experiments>3</experiments>
</comment>
<comment type="interaction">
    <interactant intactId="EBI-11955057">
        <id>Q8N8B7-2</id>
    </interactant>
    <interactant intactId="EBI-18583589">
        <id>A6NGQ2</id>
        <label>OOEP</label>
    </interactant>
    <organismsDiffer>false</organismsDiffer>
    <experiments>3</experiments>
</comment>
<comment type="interaction">
    <interactant intactId="EBI-11955057">
        <id>Q8N8B7-2</id>
    </interactant>
    <interactant intactId="EBI-1051317">
        <id>Q9H4L5</id>
        <label>OSBPL3</label>
    </interactant>
    <organismsDiffer>false</organismsDiffer>
    <experiments>3</experiments>
</comment>
<comment type="interaction">
    <interactant intactId="EBI-11955057">
        <id>Q8N8B7-2</id>
    </interactant>
    <interactant intactId="EBI-79165">
        <id>Q9NRD5</id>
        <label>PICK1</label>
    </interactant>
    <organismsDiffer>false</organismsDiffer>
    <experiments>3</experiments>
</comment>
<comment type="interaction">
    <interactant intactId="EBI-11955057">
        <id>Q8N8B7-2</id>
    </interactant>
    <interactant intactId="EBI-742388">
        <id>Q9H8W4</id>
        <label>PLEKHF2</label>
    </interactant>
    <organismsDiffer>false</organismsDiffer>
    <experiments>3</experiments>
</comment>
<comment type="interaction">
    <interactant intactId="EBI-11955057">
        <id>Q8N8B7-2</id>
    </interactant>
    <interactant intactId="EBI-302345">
        <id>Q8ND90</id>
        <label>PNMA1</label>
    </interactant>
    <organismsDiffer>false</organismsDiffer>
    <experiments>3</experiments>
</comment>
<comment type="interaction">
    <interactant intactId="EBI-11955057">
        <id>Q8N8B7-2</id>
    </interactant>
    <interactant intactId="EBI-10171633">
        <id>Q96PV4</id>
        <label>PNMA5</label>
    </interactant>
    <organismsDiffer>false</organismsDiffer>
    <experiments>3</experiments>
</comment>
<comment type="interaction">
    <interactant intactId="EBI-11955057">
        <id>Q8N8B7-2</id>
    </interactant>
    <interactant intactId="EBI-11954250">
        <id>P49023-2</id>
        <label>PXN</label>
    </interactant>
    <organismsDiffer>false</organismsDiffer>
    <experiments>3</experiments>
</comment>
<comment type="interaction">
    <interactant intactId="EBI-11955057">
        <id>Q8N8B7-2</id>
    </interactant>
    <interactant intactId="EBI-2130266">
        <id>Q9H4P4</id>
        <label>RNF41</label>
    </interactant>
    <organismsDiffer>false</organismsDiffer>
    <experiments>3</experiments>
</comment>
<comment type="interaction">
    <interactant intactId="EBI-11955057">
        <id>Q8N8B7-2</id>
    </interactant>
    <interactant intactId="EBI-2952709">
        <id>Q92622</id>
        <label>RUBCN</label>
    </interactant>
    <organismsDiffer>false</organismsDiffer>
    <experiments>3</experiments>
</comment>
<comment type="interaction">
    <interactant intactId="EBI-11955057">
        <id>Q8N8B7-2</id>
    </interactant>
    <interactant intactId="EBI-10326741">
        <id>Q9P2F8-2</id>
        <label>SIPA1L2</label>
    </interactant>
    <organismsDiffer>false</organismsDiffer>
    <experiments>3</experiments>
</comment>
<comment type="interaction">
    <interactant intactId="EBI-11955057">
        <id>Q8N8B7-2</id>
    </interactant>
    <interactant intactId="EBI-741237">
        <id>O60504</id>
        <label>SORBS3</label>
    </interactant>
    <organismsDiffer>false</organismsDiffer>
    <experiments>3</experiments>
</comment>
<comment type="interaction">
    <interactant intactId="EBI-11955057">
        <id>Q8N8B7-2</id>
    </interactant>
    <interactant intactId="EBI-2515299">
        <id>O43805</id>
        <label>SSNA1</label>
    </interactant>
    <organismsDiffer>false</organismsDiffer>
    <experiments>3</experiments>
</comment>
<comment type="interaction">
    <interactant intactId="EBI-11955057">
        <id>Q8N8B7-2</id>
    </interactant>
    <interactant intactId="EBI-1053876">
        <id>Q13033-2</id>
        <label>STRN3</label>
    </interactant>
    <organismsDiffer>false</organismsDiffer>
    <experiments>3</experiments>
</comment>
<comment type="interaction">
    <interactant intactId="EBI-11955057">
        <id>Q8N8B7-2</id>
    </interactant>
    <interactant intactId="EBI-712466">
        <id>Q16623</id>
        <label>STX1A</label>
    </interactant>
    <organismsDiffer>false</organismsDiffer>
    <experiments>3</experiments>
</comment>
<comment type="interaction">
    <interactant intactId="EBI-11955057">
        <id>Q8N8B7-2</id>
    </interactant>
    <interactant intactId="EBI-744942">
        <id>Q12846</id>
        <label>STX4</label>
    </interactant>
    <organismsDiffer>false</organismsDiffer>
    <experiments>3</experiments>
</comment>
<comment type="interaction">
    <interactant intactId="EBI-11955057">
        <id>Q8N8B7-2</id>
    </interactant>
    <interactant intactId="EBI-978581">
        <id>Q15633</id>
        <label>TARBP2</label>
    </interactant>
    <organismsDiffer>false</organismsDiffer>
    <experiments>3</experiments>
</comment>
<comment type="interaction">
    <interactant intactId="EBI-11955057">
        <id>Q8N8B7-2</id>
    </interactant>
    <interactant intactId="EBI-3923210">
        <id>Q8TDR4</id>
        <label>TCP10L</label>
    </interactant>
    <organismsDiffer>false</organismsDiffer>
    <experiments>3</experiments>
</comment>
<comment type="interaction">
    <interactant intactId="EBI-11955057">
        <id>Q8N8B7-2</id>
    </interactant>
    <interactant intactId="EBI-741515">
        <id>Q9NVV9</id>
        <label>THAP1</label>
    </interactant>
    <organismsDiffer>false</organismsDiffer>
    <experiments>3</experiments>
</comment>
<comment type="interaction">
    <interactant intactId="EBI-11955057">
        <id>Q8N8B7-2</id>
    </interactant>
    <interactant intactId="EBI-11741437">
        <id>Q08117-2</id>
        <label>TLE5</label>
    </interactant>
    <organismsDiffer>false</organismsDiffer>
    <experiments>3</experiments>
</comment>
<comment type="interaction">
    <interactant intactId="EBI-11955057">
        <id>Q8N8B7-2</id>
    </interactant>
    <interactant intactId="EBI-12807858">
        <id>Q7Z6W1</id>
        <label>TMCO2</label>
    </interactant>
    <organismsDiffer>false</organismsDiffer>
    <experiments>3</experiments>
</comment>
<comment type="interaction">
    <interactant intactId="EBI-11955057">
        <id>Q8N8B7-2</id>
    </interactant>
    <interactant intactId="EBI-357849">
        <id>Q15025</id>
        <label>TNIP1</label>
    </interactant>
    <organismsDiffer>false</organismsDiffer>
    <experiments>3</experiments>
</comment>
<comment type="interaction">
    <interactant intactId="EBI-11955057">
        <id>Q8N8B7-2</id>
    </interactant>
    <interactant intactId="EBI-2509913">
        <id>Q96KP6</id>
        <label>TNIP3</label>
    </interactant>
    <organismsDiffer>false</organismsDiffer>
    <experiments>3</experiments>
</comment>
<comment type="interaction">
    <interactant intactId="EBI-11955057">
        <id>Q8N8B7-2</id>
    </interactant>
    <interactant intactId="EBI-355744">
        <id>Q12933</id>
        <label>TRAF2</label>
    </interactant>
    <organismsDiffer>false</organismsDiffer>
    <experiments>3</experiments>
</comment>
<comment type="interaction">
    <interactant intactId="EBI-11955057">
        <id>Q8N8B7-2</id>
    </interactant>
    <interactant intactId="EBI-740098">
        <id>P36406</id>
        <label>TRIM23</label>
    </interactant>
    <organismsDiffer>false</organismsDiffer>
    <experiments>3</experiments>
</comment>
<comment type="interaction">
    <interactant intactId="EBI-11955057">
        <id>Q8N8B7-2</id>
    </interactant>
    <interactant intactId="EBI-719493">
        <id>P14373</id>
        <label>TRIM27</label>
    </interactant>
    <organismsDiffer>false</organismsDiffer>
    <experiments>5</experiments>
</comment>
<comment type="interaction">
    <interactant intactId="EBI-11955057">
        <id>Q8N8B7-2</id>
    </interactant>
    <interactant intactId="EBI-742790">
        <id>Q13049</id>
        <label>TRIM32</label>
    </interactant>
    <organismsDiffer>false</organismsDiffer>
    <experiments>3</experiments>
</comment>
<comment type="interaction">
    <interactant intactId="EBI-11955057">
        <id>Q8N8B7-2</id>
    </interactant>
    <interactant intactId="EBI-17716262">
        <id>Q9UPQ4-2</id>
        <label>TRIM35</label>
    </interactant>
    <organismsDiffer>false</organismsDiffer>
    <experiments>3</experiments>
</comment>
<comment type="interaction">
    <interactant intactId="EBI-11955057">
        <id>Q8N8B7-2</id>
    </interactant>
    <interactant intactId="EBI-741602">
        <id>O94972</id>
        <label>TRIM37</label>
    </interactant>
    <organismsDiffer>false</organismsDiffer>
    <experiments>3</experiments>
</comment>
<comment type="interaction">
    <interactant intactId="EBI-11955057">
        <id>Q8N8B7-2</id>
    </interactant>
    <interactant intactId="EBI-725997">
        <id>Q8WV44</id>
        <label>TRIM41</label>
    </interactant>
    <organismsDiffer>false</organismsDiffer>
    <experiments>5</experiments>
</comment>
<comment type="interaction">
    <interactant intactId="EBI-11955057">
        <id>Q8N8B7-2</id>
    </interactant>
    <interactant intactId="EBI-2130429">
        <id>Q9BYV2</id>
        <label>TRIM54</label>
    </interactant>
    <organismsDiffer>false</organismsDiffer>
    <experiments>3</experiments>
</comment>
<comment type="interaction">
    <interactant intactId="EBI-11955057">
        <id>Q8N8B7-2</id>
    </interactant>
    <interactant intactId="EBI-11524408">
        <id>Q5T124-6</id>
        <label>UBXN11</label>
    </interactant>
    <organismsDiffer>false</organismsDiffer>
    <experiments>3</experiments>
</comment>
<comment type="interaction">
    <interactant intactId="EBI-11955057">
        <id>Q8N8B7-2</id>
    </interactant>
    <interactant intactId="EBI-8601749">
        <id>Q495M9</id>
        <label>USH1G</label>
    </interactant>
    <organismsDiffer>false</organismsDiffer>
    <experiments>3</experiments>
</comment>
<comment type="interaction">
    <interactant intactId="EBI-11955057">
        <id>Q8N8B7-2</id>
    </interactant>
    <interactant intactId="EBI-739895">
        <id>Q8N6Y0</id>
        <label>USHBP1</label>
    </interactant>
    <organismsDiffer>false</organismsDiffer>
    <experiments>3</experiments>
</comment>
<comment type="interaction">
    <interactant intactId="EBI-11955057">
        <id>Q8N8B7-2</id>
    </interactant>
    <interactant intactId="EBI-2107455">
        <id>Q08AM6</id>
        <label>VAC14</label>
    </interactant>
    <organismsDiffer>false</organismsDiffer>
    <experiments>3</experiments>
</comment>
<comment type="interaction">
    <interactant intactId="EBI-11955057">
        <id>Q8N8B7-2</id>
    </interactant>
    <interactant intactId="EBI-357430">
        <id>P61758</id>
        <label>VBP1</label>
    </interactant>
    <organismsDiffer>false</organismsDiffer>
    <experiments>3</experiments>
</comment>
<comment type="interaction">
    <interactant intactId="EBI-11955057">
        <id>Q8N8B7-2</id>
    </interactant>
    <interactant intactId="EBI-2799833">
        <id>Q8N1B4</id>
        <label>VPS52</label>
    </interactant>
    <organismsDiffer>false</organismsDiffer>
    <experiments>3</experiments>
</comment>
<comment type="interaction">
    <interactant intactId="EBI-11955057">
        <id>Q8N8B7-2</id>
    </interactant>
    <interactant intactId="EBI-10176632">
        <id>O43829</id>
        <label>ZBTB14</label>
    </interactant>
    <organismsDiffer>false</organismsDiffer>
    <experiments>3</experiments>
</comment>
<comment type="interaction">
    <interactant intactId="EBI-11955057">
        <id>Q8N8B7-2</id>
    </interactant>
    <interactant intactId="EBI-9995672">
        <id>O15060</id>
        <label>ZBTB39</label>
    </interactant>
    <organismsDiffer>false</organismsDiffer>
    <experiments>3</experiments>
</comment>
<comment type="interaction">
    <interactant intactId="EBI-11955057">
        <id>Q8N8B7-2</id>
    </interactant>
    <interactant intactId="EBI-395708">
        <id>Q96C00</id>
        <label>ZBTB9</label>
    </interactant>
    <organismsDiffer>false</organismsDiffer>
    <experiments>3</experiments>
</comment>
<comment type="interaction">
    <interactant intactId="EBI-11955057">
        <id>Q8N8B7-2</id>
    </interactant>
    <interactant intactId="EBI-8656416">
        <id>Q68DK2-5</id>
        <label>ZFYVE26</label>
    </interactant>
    <organismsDiffer>false</organismsDiffer>
    <experiments>3</experiments>
</comment>
<comment type="interaction">
    <interactant intactId="EBI-11955057">
        <id>Q8N8B7-2</id>
    </interactant>
    <interactant intactId="EBI-10698225">
        <id>Q9P0L1-2</id>
        <label>ZKSCAN7</label>
    </interactant>
    <organismsDiffer>false</organismsDiffer>
    <experiments>3</experiments>
</comment>
<comment type="interaction">
    <interactant intactId="EBI-11955057">
        <id>Q8N8B7-2</id>
    </interactant>
    <interactant intactId="EBI-750821">
        <id>Q8N554</id>
        <label>ZNF276</label>
    </interactant>
    <organismsDiffer>false</organismsDiffer>
    <experiments>3</experiments>
</comment>
<comment type="interaction">
    <interactant intactId="EBI-11955057">
        <id>Q8N8B7-2</id>
    </interactant>
    <interactant intactId="EBI-625509">
        <id>Q8N720</id>
        <label>ZNF655</label>
    </interactant>
    <organismsDiffer>false</organismsDiffer>
    <experiments>3</experiments>
</comment>
<comment type="interaction">
    <interactant intactId="EBI-11955057">
        <id>Q8N8B7-2</id>
    </interactant>
    <interactant intactId="EBI-745276">
        <id>Q9BS34</id>
        <label>ZNF670</label>
    </interactant>
    <organismsDiffer>false</organismsDiffer>
    <experiments>3</experiments>
</comment>
<comment type="interaction">
    <interactant intactId="EBI-11955057">
        <id>Q8N8B7-2</id>
    </interactant>
    <interactant intactId="EBI-4395732">
        <id>P0C7X2</id>
        <label>ZNF688</label>
    </interactant>
    <organismsDiffer>false</organismsDiffer>
    <experiments>3</experiments>
</comment>
<comment type="interaction">
    <interactant intactId="EBI-11955057">
        <id>Q8N8B7-2</id>
    </interactant>
    <interactant intactId="EBI-11962574">
        <id>Q96EG3</id>
        <label>ZNF837</label>
    </interactant>
    <organismsDiffer>false</organismsDiffer>
    <experiments>3</experiments>
</comment>
<comment type="interaction">
    <interactant intactId="EBI-11955057">
        <id>Q8N8B7-2</id>
    </interactant>
    <interactant intactId="EBI-527853">
        <id>Q9UGI0</id>
        <label>ZRANB1</label>
    </interactant>
    <organismsDiffer>false</organismsDiffer>
    <experiments>3</experiments>
</comment>
<comment type="alternative products">
    <event type="alternative splicing"/>
    <isoform>
        <id>Q8N8B7-1</id>
        <name>1</name>
        <sequence type="displayed"/>
    </isoform>
    <isoform>
        <id>Q8N8B7-2</id>
        <name>2</name>
        <sequence type="described" ref="VSP_039895"/>
    </isoform>
</comment>
<comment type="sequence caution" evidence="6">
    <conflict type="erroneous initiation">
        <sequence resource="EMBL-CDS" id="BAC04930"/>
    </conflict>
    <text>Truncated N-terminus.</text>
</comment>
<gene>
    <name type="primary">TCEANC</name>
</gene>
<dbReference type="EMBL" id="AK097032">
    <property type="protein sequence ID" value="BAC04930.1"/>
    <property type="status" value="ALT_INIT"/>
    <property type="molecule type" value="mRNA"/>
</dbReference>
<dbReference type="EMBL" id="AK315599">
    <property type="protein sequence ID" value="BAG37970.1"/>
    <property type="molecule type" value="mRNA"/>
</dbReference>
<dbReference type="EMBL" id="DC344354">
    <property type="status" value="NOT_ANNOTATED_CDS"/>
    <property type="molecule type" value="mRNA"/>
</dbReference>
<dbReference type="EMBL" id="AC079383">
    <property type="status" value="NOT_ANNOTATED_CDS"/>
    <property type="molecule type" value="Genomic_DNA"/>
</dbReference>
<dbReference type="EMBL" id="BC020095">
    <property type="status" value="NOT_ANNOTATED_CDS"/>
    <property type="molecule type" value="mRNA"/>
</dbReference>
<dbReference type="CCDS" id="CCDS48081.1">
    <molecule id="Q8N8B7-2"/>
</dbReference>
<dbReference type="CCDS" id="CCDS75954.1">
    <molecule id="Q8N8B7-1"/>
</dbReference>
<dbReference type="RefSeq" id="NP_001284492.1">
    <molecule id="Q8N8B7-1"/>
    <property type="nucleotide sequence ID" value="NM_001297563.2"/>
</dbReference>
<dbReference type="RefSeq" id="NP_001284493.1">
    <molecule id="Q8N8B7-1"/>
    <property type="nucleotide sequence ID" value="NM_001297564.2"/>
</dbReference>
<dbReference type="RefSeq" id="XP_016884805.1">
    <molecule id="Q8N8B7-2"/>
    <property type="nucleotide sequence ID" value="XM_017029316.2"/>
</dbReference>
<dbReference type="RefSeq" id="XP_016884806.1">
    <property type="nucleotide sequence ID" value="XM_017029317.1"/>
</dbReference>
<dbReference type="RefSeq" id="XP_016884807.1">
    <property type="nucleotide sequence ID" value="XM_017029318.1"/>
</dbReference>
<dbReference type="RefSeq" id="XP_016884808.1">
    <property type="nucleotide sequence ID" value="XM_017029319.1"/>
</dbReference>
<dbReference type="SMR" id="Q8N8B7"/>
<dbReference type="BioGRID" id="127996">
    <property type="interactions" value="146"/>
</dbReference>
<dbReference type="FunCoup" id="Q8N8B7">
    <property type="interactions" value="1224"/>
</dbReference>
<dbReference type="IntAct" id="Q8N8B7">
    <property type="interactions" value="127"/>
</dbReference>
<dbReference type="STRING" id="9606.ENSP00000440038"/>
<dbReference type="GlyGen" id="Q8N8B7">
    <property type="glycosylation" value="1 site, 1 O-linked glycan (1 site)"/>
</dbReference>
<dbReference type="iPTMnet" id="Q8N8B7"/>
<dbReference type="PhosphoSitePlus" id="Q8N8B7"/>
<dbReference type="BioMuta" id="TCEANC"/>
<dbReference type="DMDM" id="117949797"/>
<dbReference type="jPOST" id="Q8N8B7"/>
<dbReference type="MassIVE" id="Q8N8B7"/>
<dbReference type="PaxDb" id="9606-ENSP00000440038"/>
<dbReference type="PeptideAtlas" id="Q8N8B7"/>
<dbReference type="ProteomicsDB" id="72395">
    <molecule id="Q8N8B7-1"/>
</dbReference>
<dbReference type="ProteomicsDB" id="72396">
    <molecule id="Q8N8B7-2"/>
</dbReference>
<dbReference type="Antibodypedia" id="400">
    <property type="antibodies" value="15 antibodies from 7 providers"/>
</dbReference>
<dbReference type="DNASU" id="170082"/>
<dbReference type="Ensembl" id="ENST00000380600.2">
    <molecule id="Q8N8B7-1"/>
    <property type="protein sequence ID" value="ENSP00000369974.1"/>
    <property type="gene ID" value="ENSG00000176896.9"/>
</dbReference>
<dbReference type="Ensembl" id="ENST00000490617.1">
    <molecule id="Q8N8B7-1"/>
    <property type="protein sequence ID" value="ENSP00000512415.1"/>
    <property type="gene ID" value="ENSG00000176896.9"/>
</dbReference>
<dbReference type="Ensembl" id="ENST00000544987.3">
    <molecule id="Q8N8B7-2"/>
    <property type="protein sequence ID" value="ENSP00000440038.2"/>
    <property type="gene ID" value="ENSG00000176896.9"/>
</dbReference>
<dbReference type="Ensembl" id="ENST00000696126.2">
    <molecule id="Q8N8B7-1"/>
    <property type="protein sequence ID" value="ENSP00000512419.2"/>
    <property type="gene ID" value="ENSG00000176896.9"/>
</dbReference>
<dbReference type="Ensembl" id="ENST00000696127.1">
    <molecule id="Q8N8B7-1"/>
    <property type="protein sequence ID" value="ENSP00000512420.1"/>
    <property type="gene ID" value="ENSG00000176896.9"/>
</dbReference>
<dbReference type="Ensembl" id="ENST00000696128.1">
    <molecule id="Q8N8B7-1"/>
    <property type="protein sequence ID" value="ENSP00000512421.1"/>
    <property type="gene ID" value="ENSG00000176896.9"/>
</dbReference>
<dbReference type="Ensembl" id="ENST00000696129.1">
    <molecule id="Q8N8B7-1"/>
    <property type="protein sequence ID" value="ENSP00000512422.1"/>
    <property type="gene ID" value="ENSG00000176896.9"/>
</dbReference>
<dbReference type="Ensembl" id="ENST00000696130.1">
    <molecule id="Q8N8B7-1"/>
    <property type="protein sequence ID" value="ENSP00000512423.1"/>
    <property type="gene ID" value="ENSG00000176896.9"/>
</dbReference>
<dbReference type="GeneID" id="170082"/>
<dbReference type="KEGG" id="hsa:170082"/>
<dbReference type="MANE-Select" id="ENST00000696128.1">
    <property type="protein sequence ID" value="ENSP00000512421.1"/>
    <property type="RefSeq nucleotide sequence ID" value="NM_001297563.2"/>
    <property type="RefSeq protein sequence ID" value="NP_001284492.1"/>
</dbReference>
<dbReference type="UCSC" id="uc064yao.1">
    <molecule id="Q8N8B7-1"/>
    <property type="organism name" value="human"/>
</dbReference>
<dbReference type="AGR" id="HGNC:28277"/>
<dbReference type="CTD" id="170082"/>
<dbReference type="GeneCards" id="TCEANC"/>
<dbReference type="HGNC" id="HGNC:28277">
    <property type="gene designation" value="TCEANC"/>
</dbReference>
<dbReference type="HPA" id="ENSG00000176896">
    <property type="expression patterns" value="Low tissue specificity"/>
</dbReference>
<dbReference type="MIM" id="301084">
    <property type="type" value="gene"/>
</dbReference>
<dbReference type="neXtProt" id="NX_Q8N8B7"/>
<dbReference type="OpenTargets" id="ENSG00000176896"/>
<dbReference type="VEuPathDB" id="HostDB:ENSG00000176896"/>
<dbReference type="eggNOG" id="KOG1105">
    <property type="taxonomic scope" value="Eukaryota"/>
</dbReference>
<dbReference type="GeneTree" id="ENSGT00940000162067"/>
<dbReference type="HOGENOM" id="CLU_890113_0_0_1"/>
<dbReference type="InParanoid" id="Q8N8B7"/>
<dbReference type="OMA" id="HSRWVCL"/>
<dbReference type="OrthoDB" id="44867at2759"/>
<dbReference type="PAN-GO" id="Q8N8B7">
    <property type="GO annotations" value="2 GO annotations based on evolutionary models"/>
</dbReference>
<dbReference type="PhylomeDB" id="Q8N8B7"/>
<dbReference type="TreeFam" id="TF314970"/>
<dbReference type="PathwayCommons" id="Q8N8B7"/>
<dbReference type="SignaLink" id="Q8N8B7"/>
<dbReference type="BioGRID-ORCS" id="170082">
    <property type="hits" value="10 hits in 785 CRISPR screens"/>
</dbReference>
<dbReference type="GenomeRNAi" id="170082"/>
<dbReference type="Pharos" id="Q8N8B7">
    <property type="development level" value="Tdark"/>
</dbReference>
<dbReference type="PRO" id="PR:Q8N8B7"/>
<dbReference type="Proteomes" id="UP000005640">
    <property type="component" value="Chromosome X"/>
</dbReference>
<dbReference type="RNAct" id="Q8N8B7">
    <property type="molecule type" value="protein"/>
</dbReference>
<dbReference type="Bgee" id="ENSG00000176896">
    <property type="expression patterns" value="Expressed in granulocyte and 105 other cell types or tissues"/>
</dbReference>
<dbReference type="ExpressionAtlas" id="Q8N8B7">
    <property type="expression patterns" value="baseline and differential"/>
</dbReference>
<dbReference type="GO" id="GO:0005634">
    <property type="term" value="C:nucleus"/>
    <property type="evidence" value="ECO:0000318"/>
    <property type="project" value="GO_Central"/>
</dbReference>
<dbReference type="GO" id="GO:0006351">
    <property type="term" value="P:DNA-templated transcription"/>
    <property type="evidence" value="ECO:0007669"/>
    <property type="project" value="InterPro"/>
</dbReference>
<dbReference type="GO" id="GO:0006357">
    <property type="term" value="P:regulation of transcription by RNA polymerase II"/>
    <property type="evidence" value="ECO:0000318"/>
    <property type="project" value="GO_Central"/>
</dbReference>
<dbReference type="Gene3D" id="2.20.25.10">
    <property type="match status" value="1"/>
</dbReference>
<dbReference type="Gene3D" id="1.20.930.10">
    <property type="entry name" value="Conserved domain common to transcription factors TFIIS, elongin A, CRSP70"/>
    <property type="match status" value="1"/>
</dbReference>
<dbReference type="Gene3D" id="1.10.472.30">
    <property type="entry name" value="Transcription elongation factor S-II, central domain"/>
    <property type="match status" value="1"/>
</dbReference>
<dbReference type="InterPro" id="IPR035100">
    <property type="entry name" value="TF_IIS-typ"/>
</dbReference>
<dbReference type="InterPro" id="IPR035441">
    <property type="entry name" value="TFIIS/LEDGF_dom_sf"/>
</dbReference>
<dbReference type="InterPro" id="IPR003618">
    <property type="entry name" value="TFIIS_cen_dom"/>
</dbReference>
<dbReference type="InterPro" id="IPR036575">
    <property type="entry name" value="TFIIS_cen_dom_sf"/>
</dbReference>
<dbReference type="InterPro" id="IPR017923">
    <property type="entry name" value="TFIIS_N"/>
</dbReference>
<dbReference type="PANTHER" id="PTHR11477:SF7">
    <property type="entry name" value="TRANSCRIPTION ELONGATION FACTOR A N-TERMINAL AND CENTRAL DOMAIN-CONTAINING PROTEIN"/>
    <property type="match status" value="1"/>
</dbReference>
<dbReference type="PANTHER" id="PTHR11477">
    <property type="entry name" value="TRANSCRIPTION FACTOR S-II ZINC FINGER DOMAIN-CONTAINING PROTEIN"/>
    <property type="match status" value="1"/>
</dbReference>
<dbReference type="Pfam" id="PF08711">
    <property type="entry name" value="Med26"/>
    <property type="match status" value="1"/>
</dbReference>
<dbReference type="Pfam" id="PF07500">
    <property type="entry name" value="TFIIS_M"/>
    <property type="match status" value="1"/>
</dbReference>
<dbReference type="PIRSF" id="PIRSF006704">
    <property type="entry name" value="TF_IIS"/>
    <property type="match status" value="1"/>
</dbReference>
<dbReference type="SMART" id="SM00510">
    <property type="entry name" value="TFS2M"/>
    <property type="match status" value="1"/>
</dbReference>
<dbReference type="SUPFAM" id="SSF47676">
    <property type="entry name" value="Conserved domain common to transcription factors TFIIS, elongin A, CRSP70"/>
    <property type="match status" value="1"/>
</dbReference>
<dbReference type="SUPFAM" id="SSF46942">
    <property type="entry name" value="Elongation factor TFIIS domain 2"/>
    <property type="match status" value="1"/>
</dbReference>
<dbReference type="SUPFAM" id="SSF57783">
    <property type="entry name" value="Zinc beta-ribbon"/>
    <property type="match status" value="1"/>
</dbReference>
<dbReference type="PROSITE" id="PS51321">
    <property type="entry name" value="TFIIS_CENTRAL"/>
    <property type="match status" value="1"/>
</dbReference>
<dbReference type="PROSITE" id="PS51319">
    <property type="entry name" value="TFIIS_N"/>
    <property type="match status" value="1"/>
</dbReference>
<proteinExistence type="evidence at protein level"/>
<keyword id="KW-0025">Alternative splicing</keyword>
<keyword id="KW-1267">Proteomics identification</keyword>
<keyword id="KW-1185">Reference proteome</keyword>
<name>TEANC_HUMAN</name>